<sequence>MSKQDEVIVVGKFGASYGIRGWLKVVSFTDQPESIFDYKPWLIQVKGEWVEFSVESWKRHKGLVCKLKGLDVREEAQTYTNLEIAVKADVLPELSEDEFYWRELFGMEVVTTKGYALGVVDDIFETGSNDVLVVKANLKDAFGKKERLIPFIDEQVIKLIDREAQRIEVDWDPGF</sequence>
<name>RIMM_ALIFM</name>
<comment type="function">
    <text evidence="1">An accessory protein needed during the final step in the assembly of 30S ribosomal subunit, possibly for assembly of the head region. Essential for efficient processing of 16S rRNA. May be needed both before and after RbfA during the maturation of 16S rRNA. It has affinity for free ribosomal 30S subunits but not for 70S ribosomes.</text>
</comment>
<comment type="subunit">
    <text evidence="1">Binds ribosomal protein uS19.</text>
</comment>
<comment type="subcellular location">
    <subcellularLocation>
        <location evidence="1">Cytoplasm</location>
    </subcellularLocation>
</comment>
<comment type="domain">
    <text evidence="1">The PRC barrel domain binds ribosomal protein uS19.</text>
</comment>
<comment type="similarity">
    <text evidence="1">Belongs to the RimM family.</text>
</comment>
<keyword id="KW-0143">Chaperone</keyword>
<keyword id="KW-0963">Cytoplasm</keyword>
<keyword id="KW-0690">Ribosome biogenesis</keyword>
<keyword id="KW-0698">rRNA processing</keyword>
<accession>B5FAE6</accession>
<protein>
    <recommendedName>
        <fullName evidence="1">Ribosome maturation factor RimM</fullName>
    </recommendedName>
</protein>
<organism>
    <name type="scientific">Aliivibrio fischeri (strain MJ11)</name>
    <name type="common">Vibrio fischeri</name>
    <dbReference type="NCBI Taxonomy" id="388396"/>
    <lineage>
        <taxon>Bacteria</taxon>
        <taxon>Pseudomonadati</taxon>
        <taxon>Pseudomonadota</taxon>
        <taxon>Gammaproteobacteria</taxon>
        <taxon>Vibrionales</taxon>
        <taxon>Vibrionaceae</taxon>
        <taxon>Aliivibrio</taxon>
    </lineage>
</organism>
<feature type="chain" id="PRO_1000089531" description="Ribosome maturation factor RimM">
    <location>
        <begin position="1"/>
        <end position="175"/>
    </location>
</feature>
<feature type="domain" description="PRC barrel" evidence="1">
    <location>
        <begin position="95"/>
        <end position="175"/>
    </location>
</feature>
<dbReference type="EMBL" id="CP001139">
    <property type="protein sequence ID" value="ACH65978.1"/>
    <property type="molecule type" value="Genomic_DNA"/>
</dbReference>
<dbReference type="RefSeq" id="WP_012533409.1">
    <property type="nucleotide sequence ID" value="NC_011184.1"/>
</dbReference>
<dbReference type="SMR" id="B5FAE6"/>
<dbReference type="KEGG" id="vfm:VFMJ11_0562"/>
<dbReference type="HOGENOM" id="CLU_077636_1_0_6"/>
<dbReference type="Proteomes" id="UP000001857">
    <property type="component" value="Chromosome I"/>
</dbReference>
<dbReference type="GO" id="GO:0005737">
    <property type="term" value="C:cytoplasm"/>
    <property type="evidence" value="ECO:0007669"/>
    <property type="project" value="UniProtKB-SubCell"/>
</dbReference>
<dbReference type="GO" id="GO:0005840">
    <property type="term" value="C:ribosome"/>
    <property type="evidence" value="ECO:0007669"/>
    <property type="project" value="InterPro"/>
</dbReference>
<dbReference type="GO" id="GO:0043022">
    <property type="term" value="F:ribosome binding"/>
    <property type="evidence" value="ECO:0007669"/>
    <property type="project" value="InterPro"/>
</dbReference>
<dbReference type="GO" id="GO:0042274">
    <property type="term" value="P:ribosomal small subunit biogenesis"/>
    <property type="evidence" value="ECO:0007669"/>
    <property type="project" value="UniProtKB-UniRule"/>
</dbReference>
<dbReference type="GO" id="GO:0006364">
    <property type="term" value="P:rRNA processing"/>
    <property type="evidence" value="ECO:0007669"/>
    <property type="project" value="UniProtKB-UniRule"/>
</dbReference>
<dbReference type="Gene3D" id="2.30.30.240">
    <property type="entry name" value="PRC-barrel domain"/>
    <property type="match status" value="1"/>
</dbReference>
<dbReference type="Gene3D" id="2.40.30.60">
    <property type="entry name" value="RimM"/>
    <property type="match status" value="1"/>
</dbReference>
<dbReference type="HAMAP" id="MF_00014">
    <property type="entry name" value="Ribosome_mat_RimM"/>
    <property type="match status" value="1"/>
</dbReference>
<dbReference type="InterPro" id="IPR027275">
    <property type="entry name" value="PRC-brl_dom"/>
</dbReference>
<dbReference type="InterPro" id="IPR011033">
    <property type="entry name" value="PRC_barrel-like_sf"/>
</dbReference>
<dbReference type="InterPro" id="IPR011961">
    <property type="entry name" value="RimM"/>
</dbReference>
<dbReference type="InterPro" id="IPR002676">
    <property type="entry name" value="RimM_N"/>
</dbReference>
<dbReference type="InterPro" id="IPR036976">
    <property type="entry name" value="RimM_N_sf"/>
</dbReference>
<dbReference type="InterPro" id="IPR009000">
    <property type="entry name" value="Transl_B-barrel_sf"/>
</dbReference>
<dbReference type="NCBIfam" id="TIGR02273">
    <property type="entry name" value="16S_RimM"/>
    <property type="match status" value="1"/>
</dbReference>
<dbReference type="PANTHER" id="PTHR33692">
    <property type="entry name" value="RIBOSOME MATURATION FACTOR RIMM"/>
    <property type="match status" value="1"/>
</dbReference>
<dbReference type="PANTHER" id="PTHR33692:SF1">
    <property type="entry name" value="RIBOSOME MATURATION FACTOR RIMM"/>
    <property type="match status" value="1"/>
</dbReference>
<dbReference type="Pfam" id="PF05239">
    <property type="entry name" value="PRC"/>
    <property type="match status" value="1"/>
</dbReference>
<dbReference type="Pfam" id="PF01782">
    <property type="entry name" value="RimM"/>
    <property type="match status" value="1"/>
</dbReference>
<dbReference type="SUPFAM" id="SSF50346">
    <property type="entry name" value="PRC-barrel domain"/>
    <property type="match status" value="1"/>
</dbReference>
<dbReference type="SUPFAM" id="SSF50447">
    <property type="entry name" value="Translation proteins"/>
    <property type="match status" value="1"/>
</dbReference>
<evidence type="ECO:0000255" key="1">
    <source>
        <dbReference type="HAMAP-Rule" id="MF_00014"/>
    </source>
</evidence>
<reference key="1">
    <citation type="submission" date="2008-08" db="EMBL/GenBank/DDBJ databases">
        <title>Complete sequence of Vibrio fischeri strain MJ11.</title>
        <authorList>
            <person name="Mandel M.J."/>
            <person name="Stabb E.V."/>
            <person name="Ruby E.G."/>
            <person name="Ferriera S."/>
            <person name="Johnson J."/>
            <person name="Kravitz S."/>
            <person name="Beeson K."/>
            <person name="Sutton G."/>
            <person name="Rogers Y.-H."/>
            <person name="Friedman R."/>
            <person name="Frazier M."/>
            <person name="Venter J.C."/>
        </authorList>
    </citation>
    <scope>NUCLEOTIDE SEQUENCE [LARGE SCALE GENOMIC DNA]</scope>
    <source>
        <strain>MJ11</strain>
    </source>
</reference>
<gene>
    <name evidence="1" type="primary">rimM</name>
    <name type="ordered locus">VFMJ11_0562</name>
</gene>
<proteinExistence type="inferred from homology"/>